<sequence length="166" mass="18149">MAKRRAAEPLTFRVPWKRLLLSDFPEEPPLWVPPSGAARPLKRQGDAGTMAEPASAPRKRRGGGDDEPELQGRGLEPGEPPPGEQGEPQVSRAAGGGDRVESAGSPQGADEVHSQHNEDFWQYNTFQYWRNPLPPIDLAALEDVSANSLTETLEDKNEGVEIDMES</sequence>
<evidence type="ECO:0000250" key="1">
    <source>
        <dbReference type="UniProtKB" id="Q8VCE4"/>
    </source>
</evidence>
<evidence type="ECO:0000256" key="2">
    <source>
        <dbReference type="SAM" id="MobiDB-lite"/>
    </source>
</evidence>
<proteinExistence type="evidence at protein level"/>
<keyword id="KW-0597">Phosphoprotein</keyword>
<keyword id="KW-1185">Reference proteome</keyword>
<organism>
    <name type="scientific">Rattus norvegicus</name>
    <name type="common">Rat</name>
    <dbReference type="NCBI Taxonomy" id="10116"/>
    <lineage>
        <taxon>Eukaryota</taxon>
        <taxon>Metazoa</taxon>
        <taxon>Chordata</taxon>
        <taxon>Craniata</taxon>
        <taxon>Vertebrata</taxon>
        <taxon>Euteleostomi</taxon>
        <taxon>Mammalia</taxon>
        <taxon>Eutheria</taxon>
        <taxon>Euarchontoglires</taxon>
        <taxon>Glires</taxon>
        <taxon>Rodentia</taxon>
        <taxon>Myomorpha</taxon>
        <taxon>Muroidea</taxon>
        <taxon>Muridae</taxon>
        <taxon>Murinae</taxon>
        <taxon>Rattus</taxon>
    </lineage>
</organism>
<protein>
    <recommendedName>
        <fullName>Uncharacterized protein C9orf40 homolog</fullName>
    </recommendedName>
</protein>
<name>CI040_RAT</name>
<feature type="chain" id="PRO_0000089684" description="Uncharacterized protein C9orf40 homolog">
    <location>
        <begin position="1"/>
        <end position="166"/>
    </location>
</feature>
<feature type="region of interest" description="Disordered" evidence="2">
    <location>
        <begin position="25"/>
        <end position="116"/>
    </location>
</feature>
<feature type="modified residue" description="Phosphoserine" evidence="1">
    <location>
        <position position="105"/>
    </location>
</feature>
<accession>Q66H24</accession>
<dbReference type="EMBL" id="BC082069">
    <property type="protein sequence ID" value="AAH82069.1"/>
    <property type="molecule type" value="mRNA"/>
</dbReference>
<dbReference type="RefSeq" id="NP_001019464.1">
    <property type="nucleotide sequence ID" value="NM_001024293.1"/>
</dbReference>
<dbReference type="FunCoup" id="Q66H24">
    <property type="interactions" value="713"/>
</dbReference>
<dbReference type="STRING" id="10116.ENSRNOP00000017155"/>
<dbReference type="PhosphoSitePlus" id="Q66H24"/>
<dbReference type="jPOST" id="Q66H24"/>
<dbReference type="PaxDb" id="10116-ENSRNOP00000017155"/>
<dbReference type="Ensembl" id="ENSRNOT00000017133.5">
    <property type="protein sequence ID" value="ENSRNOP00000017155.3"/>
    <property type="gene ID" value="ENSRNOG00000025644.4"/>
</dbReference>
<dbReference type="GeneID" id="499331"/>
<dbReference type="KEGG" id="rno:499331"/>
<dbReference type="UCSC" id="RGD:1563237">
    <property type="organism name" value="rat"/>
</dbReference>
<dbReference type="AGR" id="RGD:1563237"/>
<dbReference type="CTD" id="499331"/>
<dbReference type="RGD" id="1563237">
    <property type="gene designation" value="C1h9orf40"/>
</dbReference>
<dbReference type="eggNOG" id="ENOG502SEFF">
    <property type="taxonomic scope" value="Eukaryota"/>
</dbReference>
<dbReference type="GeneTree" id="ENSGT00390000001325"/>
<dbReference type="HOGENOM" id="CLU_117698_1_0_1"/>
<dbReference type="InParanoid" id="Q66H24"/>
<dbReference type="OMA" id="QLNEEFW"/>
<dbReference type="OrthoDB" id="8960251at2759"/>
<dbReference type="PhylomeDB" id="Q66H24"/>
<dbReference type="TreeFam" id="TF338442"/>
<dbReference type="PRO" id="PR:Q66H24"/>
<dbReference type="Proteomes" id="UP000002494">
    <property type="component" value="Chromosome 1"/>
</dbReference>
<dbReference type="Bgee" id="ENSRNOG00000025644">
    <property type="expression patterns" value="Expressed in testis and 19 other cell types or tissues"/>
</dbReference>
<dbReference type="InterPro" id="IPR042349">
    <property type="entry name" value="C9orf40-like"/>
</dbReference>
<dbReference type="InterPro" id="IPR033461">
    <property type="entry name" value="WRNPLPNID"/>
</dbReference>
<dbReference type="PANTHER" id="PTHR16003">
    <property type="entry name" value="C9ORF40 ISOFORM 1"/>
    <property type="match status" value="1"/>
</dbReference>
<dbReference type="PANTHER" id="PTHR16003:SF3">
    <property type="entry name" value="CHROMOSOME 9 C9ORF40 HOMOLOG"/>
    <property type="match status" value="1"/>
</dbReference>
<dbReference type="Pfam" id="PF15017">
    <property type="entry name" value="WRNPLPNID"/>
    <property type="match status" value="1"/>
</dbReference>
<reference key="1">
    <citation type="journal article" date="2004" name="Genome Res.">
        <title>The status, quality, and expansion of the NIH full-length cDNA project: the Mammalian Gene Collection (MGC).</title>
        <authorList>
            <consortium name="The MGC Project Team"/>
        </authorList>
    </citation>
    <scope>NUCLEOTIDE SEQUENCE [LARGE SCALE MRNA]</scope>
    <source>
        <tissue>Testis</tissue>
    </source>
</reference>
<reference key="2">
    <citation type="journal article" date="2012" name="Nat. Commun.">
        <title>Quantitative maps of protein phosphorylation sites across 14 different rat organs and tissues.</title>
        <authorList>
            <person name="Lundby A."/>
            <person name="Secher A."/>
            <person name="Lage K."/>
            <person name="Nordsborg N.B."/>
            <person name="Dmytriyev A."/>
            <person name="Lundby C."/>
            <person name="Olsen J.V."/>
        </authorList>
    </citation>
    <scope>IDENTIFICATION BY MASS SPECTROMETRY [LARGE SCALE ANALYSIS]</scope>
</reference>